<gene>
    <name type="ordered locus">aq_243</name>
</gene>
<feature type="signal peptide" evidence="1">
    <location>
        <begin position="1"/>
        <end position="17"/>
    </location>
</feature>
<feature type="chain" id="PRO_0000013613" description="Uncharacterized protein aq_243">
    <location>
        <begin position="18"/>
        <end position="495"/>
    </location>
</feature>
<reference key="1">
    <citation type="journal article" date="1998" name="Nature">
        <title>The complete genome of the hyperthermophilic bacterium Aquifex aeolicus.</title>
        <authorList>
            <person name="Deckert G."/>
            <person name="Warren P.V."/>
            <person name="Gaasterland T."/>
            <person name="Young W.G."/>
            <person name="Lenox A.L."/>
            <person name="Graham D.E."/>
            <person name="Overbeek R."/>
            <person name="Snead M.A."/>
            <person name="Keller M."/>
            <person name="Aujay M."/>
            <person name="Huber R."/>
            <person name="Feldman R.A."/>
            <person name="Short J.M."/>
            <person name="Olsen G.J."/>
            <person name="Swanson R.V."/>
        </authorList>
    </citation>
    <scope>NUCLEOTIDE SEQUENCE [LARGE SCALE GENOMIC DNA]</scope>
    <source>
        <strain>VF5</strain>
    </source>
</reference>
<protein>
    <recommendedName>
        <fullName>Uncharacterized protein aq_243</fullName>
    </recommendedName>
</protein>
<keyword id="KW-1185">Reference proteome</keyword>
<keyword id="KW-0732">Signal</keyword>
<accession>O66606</accession>
<dbReference type="EMBL" id="AE000657">
    <property type="protein sequence ID" value="AAC06570.1"/>
    <property type="molecule type" value="Genomic_DNA"/>
</dbReference>
<dbReference type="PIR" id="B70322">
    <property type="entry name" value="B70322"/>
</dbReference>
<dbReference type="RefSeq" id="NP_213166.1">
    <property type="nucleotide sequence ID" value="NC_000918.1"/>
</dbReference>
<dbReference type="RefSeq" id="WP_010880104.1">
    <property type="nucleotide sequence ID" value="NC_000918.1"/>
</dbReference>
<dbReference type="EnsemblBacteria" id="AAC06570">
    <property type="protein sequence ID" value="AAC06570"/>
    <property type="gene ID" value="aq_243"/>
</dbReference>
<dbReference type="KEGG" id="aae:aq_243"/>
<dbReference type="HOGENOM" id="CLU_540548_0_0_0"/>
<dbReference type="InParanoid" id="O66606"/>
<dbReference type="OrthoDB" id="9813582at2"/>
<dbReference type="Proteomes" id="UP000000798">
    <property type="component" value="Chromosome"/>
</dbReference>
<evidence type="ECO:0000255" key="1"/>
<proteinExistence type="inferred from homology"/>
<organism>
    <name type="scientific">Aquifex aeolicus (strain VF5)</name>
    <dbReference type="NCBI Taxonomy" id="224324"/>
    <lineage>
        <taxon>Bacteria</taxon>
        <taxon>Pseudomonadati</taxon>
        <taxon>Aquificota</taxon>
        <taxon>Aquificia</taxon>
        <taxon>Aquificales</taxon>
        <taxon>Aquificaceae</taxon>
        <taxon>Aquifex</taxon>
    </lineage>
</organism>
<name>Y243_AQUAE</name>
<sequence>MRTLSLLILFLSTFLFAQVPKELLEFFQRSGYVVEKEGEKVLIDLPRGKAFPGEIFEVFQSKKPIIHPVTKKVLGYKEEKVGEVEVIKPRENFSEAKTLENNGIKPGDRVKLKIGSVCYIGGDEGYYALSQVVQNVKRNSENCDYVVKELENGYGVSYKGKPLAFFQYSGVGFAKRGGVFEDFALKAKFVRSLESLPLSADICKLFGKKDYLVVLFSDKVKVYEVLKTDFVEVLSYAIPTGYPVGVVCYENKGRSAVLVNMISNGEASSAVLSPVGNSLMLTDKNVPYLFGFFYQNGKKVLIGQEFKGSWGKVYRFELRGDKLVRKDALNLPEDFRVDGANAWNNVLVFVDNDGQLRVYVNDEEVLTEDGFGLSYTTAEVPGVYEYAEGDKYGFYVRPNFTKVYKDVLPLIAKNRASNIFQLVGFTKFTEGELWTVVRKKEKVYEAIKLKGRKFEEAIQAIVRDSEGRIFVITGSKGTIPIQNRGEVYLIEITPL</sequence>